<gene>
    <name type="primary">mymA</name>
    <name type="ordered locus">MT3168</name>
</gene>
<organism>
    <name type="scientific">Mycobacterium tuberculosis (strain CDC 1551 / Oshkosh)</name>
    <dbReference type="NCBI Taxonomy" id="83331"/>
    <lineage>
        <taxon>Bacteria</taxon>
        <taxon>Bacillati</taxon>
        <taxon>Actinomycetota</taxon>
        <taxon>Actinomycetes</taxon>
        <taxon>Mycobacteriales</taxon>
        <taxon>Mycobacteriaceae</taxon>
        <taxon>Mycobacterium</taxon>
        <taxon>Mycobacterium tuberculosis complex</taxon>
    </lineage>
</organism>
<dbReference type="EC" id="1.14.13.-"/>
<dbReference type="EMBL" id="AE000516">
    <property type="protein sequence ID" value="AAK47504.1"/>
    <property type="molecule type" value="Genomic_DNA"/>
</dbReference>
<dbReference type="PIR" id="G70852">
    <property type="entry name" value="G70852"/>
</dbReference>
<dbReference type="RefSeq" id="WP_003899906.1">
    <property type="nucleotide sequence ID" value="NZ_KK341227.1"/>
</dbReference>
<dbReference type="SMR" id="P9WNF6"/>
<dbReference type="KEGG" id="mtc:MT3168"/>
<dbReference type="PATRIC" id="fig|83331.31.peg.3414"/>
<dbReference type="HOGENOM" id="CLU_032067_2_0_11"/>
<dbReference type="Proteomes" id="UP000001020">
    <property type="component" value="Chromosome"/>
</dbReference>
<dbReference type="GO" id="GO:0050660">
    <property type="term" value="F:flavin adenine dinucleotide binding"/>
    <property type="evidence" value="ECO:0007669"/>
    <property type="project" value="InterPro"/>
</dbReference>
<dbReference type="GO" id="GO:0004499">
    <property type="term" value="F:N,N-dimethylaniline monooxygenase activity"/>
    <property type="evidence" value="ECO:0007669"/>
    <property type="project" value="InterPro"/>
</dbReference>
<dbReference type="GO" id="GO:0050661">
    <property type="term" value="F:NADP binding"/>
    <property type="evidence" value="ECO:0007669"/>
    <property type="project" value="InterPro"/>
</dbReference>
<dbReference type="FunFam" id="3.50.50.60:FF:000297">
    <property type="entry name" value="FAD-containing monooxygenase MymA"/>
    <property type="match status" value="1"/>
</dbReference>
<dbReference type="FunFam" id="3.50.50.60:FF:000384">
    <property type="entry name" value="FAD-containing monooxygenase MymA"/>
    <property type="match status" value="1"/>
</dbReference>
<dbReference type="Gene3D" id="3.50.50.60">
    <property type="entry name" value="FAD/NAD(P)-binding domain"/>
    <property type="match status" value="2"/>
</dbReference>
<dbReference type="InterPro" id="IPR051820">
    <property type="entry name" value="FAD-binding_MO"/>
</dbReference>
<dbReference type="InterPro" id="IPR036188">
    <property type="entry name" value="FAD/NAD-bd_sf"/>
</dbReference>
<dbReference type="InterPro" id="IPR020946">
    <property type="entry name" value="Flavin_mOase-like"/>
</dbReference>
<dbReference type="PANTHER" id="PTHR43872">
    <property type="entry name" value="MONOOXYGENASE, PUTATIVE (AFU_ORTHOLOGUE AFUA_8G02570)-RELATED"/>
    <property type="match status" value="1"/>
</dbReference>
<dbReference type="PANTHER" id="PTHR43872:SF1">
    <property type="entry name" value="MONOOXYGENASE, PUTATIVE (AFU_ORTHOLOGUE AFUA_8G02570)-RELATED"/>
    <property type="match status" value="1"/>
</dbReference>
<dbReference type="Pfam" id="PF00743">
    <property type="entry name" value="FMO-like"/>
    <property type="match status" value="1"/>
</dbReference>
<dbReference type="Pfam" id="PF13450">
    <property type="entry name" value="NAD_binding_8"/>
    <property type="match status" value="1"/>
</dbReference>
<dbReference type="SUPFAM" id="SSF51905">
    <property type="entry name" value="FAD/NAD(P)-binding domain"/>
    <property type="match status" value="2"/>
</dbReference>
<protein>
    <recommendedName>
        <fullName>Putative FAD-containing monooxygenase MymA</fullName>
        <ecNumber>1.14.13.-</ecNumber>
    </recommendedName>
</protein>
<comment type="function">
    <text evidence="1">Required for maintaining the appropriate mycolic acid composition and permeability of the envelope on its exposure to acidic pH.</text>
</comment>
<comment type="cofactor">
    <cofactor evidence="1">
        <name>FAD</name>
        <dbReference type="ChEBI" id="CHEBI:57692"/>
    </cofactor>
    <text evidence="1">Binds 1 FAD per subunit.</text>
</comment>
<comment type="similarity">
    <text evidence="3">Belongs to the FAD-binding monooxygenase family.</text>
</comment>
<sequence>MNQHFDVLIIGAGLSGIGTACHVTAEFPDKTIALLERRERLGGTWDLFRYPGVRSDSDMFTFGYKFRPWRDVKVLADGASIRQYIADTATEFGVDEKIHYGLKVNTAEWSSRQCRWTVAGVHEATGETRTYTCDYLISCTGYYNYDAGYLPDFPGVHRFGGRCVHPQHWPEDLDYSGKKVVVIGSGATAVTLVPAMAGSNPGSAAHVTMLQRSPSYIFSLPAVDKISEVLGRFLPDRWVYEFGRRRNIAIQRKLYQACRRWPKLMRRLLLWEVRRRLGRSVDMSNFTPNYLPWDERLCAVPNGDLFKTLASGAASVVTDQIETFTEKGILCKSGREIEADIIVTATGLNIQMLGGMRLIVDGAEYQLPEKMTYKGVLLENAPNLAWIIGYTNASWTLKSDIAGAYLCRLLRHMADNGYTVATPRDAQDCALDVGMFDQLNSGYVKRGQDIMPRQGSKHPWRVLMHYEKDAKILLEDPIDDGVLHFAAAAQDHAAA</sequence>
<accession>P9WNF6</accession>
<accession>F2GNY5</accession>
<accession>L0TBT0</accession>
<accession>O53300</accession>
<accession>Q7D658</accession>
<evidence type="ECO:0000250" key="1"/>
<evidence type="ECO:0000255" key="2"/>
<evidence type="ECO:0000305" key="3"/>
<proteinExistence type="inferred from homology"/>
<keyword id="KW-0274">FAD</keyword>
<keyword id="KW-0285">Flavoprotein</keyword>
<keyword id="KW-0503">Monooxygenase</keyword>
<keyword id="KW-0560">Oxidoreductase</keyword>
<keyword id="KW-1185">Reference proteome</keyword>
<feature type="chain" id="PRO_0000427135" description="Putative FAD-containing monooxygenase MymA">
    <location>
        <begin position="1"/>
        <end position="495"/>
    </location>
</feature>
<feature type="binding site" evidence="1">
    <location>
        <position position="15"/>
    </location>
    <ligand>
        <name>FAD</name>
        <dbReference type="ChEBI" id="CHEBI:57692"/>
    </ligand>
</feature>
<feature type="binding site" evidence="1">
    <location>
        <position position="36"/>
    </location>
    <ligand>
        <name>FAD</name>
        <dbReference type="ChEBI" id="CHEBI:57692"/>
    </ligand>
</feature>
<feature type="binding site" evidence="1">
    <location>
        <position position="45"/>
    </location>
    <ligand>
        <name>FAD</name>
        <dbReference type="ChEBI" id="CHEBI:57692"/>
    </ligand>
</feature>
<feature type="binding site" evidence="1">
    <location>
        <begin position="56"/>
        <end position="57"/>
    </location>
    <ligand>
        <name>FAD</name>
        <dbReference type="ChEBI" id="CHEBI:57692"/>
    </ligand>
</feature>
<feature type="binding site" evidence="1">
    <location>
        <position position="104"/>
    </location>
    <ligand>
        <name>FAD</name>
        <dbReference type="ChEBI" id="CHEBI:57692"/>
    </ligand>
</feature>
<feature type="site" description="Transition state stabilizer" evidence="2">
    <location>
        <position position="296"/>
    </location>
</feature>
<reference key="1">
    <citation type="journal article" date="2002" name="J. Bacteriol.">
        <title>Whole-genome comparison of Mycobacterium tuberculosis clinical and laboratory strains.</title>
        <authorList>
            <person name="Fleischmann R.D."/>
            <person name="Alland D."/>
            <person name="Eisen J.A."/>
            <person name="Carpenter L."/>
            <person name="White O."/>
            <person name="Peterson J.D."/>
            <person name="DeBoy R.T."/>
            <person name="Dodson R.J."/>
            <person name="Gwinn M.L."/>
            <person name="Haft D.H."/>
            <person name="Hickey E.K."/>
            <person name="Kolonay J.F."/>
            <person name="Nelson W.C."/>
            <person name="Umayam L.A."/>
            <person name="Ermolaeva M.D."/>
            <person name="Salzberg S.L."/>
            <person name="Delcher A."/>
            <person name="Utterback T.R."/>
            <person name="Weidman J.F."/>
            <person name="Khouri H.M."/>
            <person name="Gill J."/>
            <person name="Mikula A."/>
            <person name="Bishai W."/>
            <person name="Jacobs W.R. Jr."/>
            <person name="Venter J.C."/>
            <person name="Fraser C.M."/>
        </authorList>
    </citation>
    <scope>NUCLEOTIDE SEQUENCE [LARGE SCALE GENOMIC DNA]</scope>
    <source>
        <strain>CDC 1551 / Oshkosh</strain>
    </source>
</reference>
<name>MYMA_MYCTO</name>